<keyword id="KW-0534">Nitrate assimilation</keyword>
<keyword id="KW-1185">Reference proteome</keyword>
<organism>
    <name type="scientific">Candida glabrata (strain ATCC 2001 / BCRC 20586 / JCM 3761 / NBRC 0622 / NRRL Y-65 / CBS 138)</name>
    <name type="common">Yeast</name>
    <name type="synonym">Nakaseomyces glabratus</name>
    <dbReference type="NCBI Taxonomy" id="284593"/>
    <lineage>
        <taxon>Eukaryota</taxon>
        <taxon>Fungi</taxon>
        <taxon>Dikarya</taxon>
        <taxon>Ascomycota</taxon>
        <taxon>Saccharomycotina</taxon>
        <taxon>Saccharomycetes</taxon>
        <taxon>Saccharomycetales</taxon>
        <taxon>Saccharomycetaceae</taxon>
        <taxon>Nakaseomyces</taxon>
    </lineage>
</organism>
<evidence type="ECO:0000250" key="1"/>
<evidence type="ECO:0000305" key="2"/>
<accession>Q8NJR5</accession>
<accession>Q6FP16</accession>
<dbReference type="EMBL" id="AF525167">
    <property type="protein sequence ID" value="AAM91940.1"/>
    <property type="molecule type" value="Genomic_DNA"/>
</dbReference>
<dbReference type="EMBL" id="CR380956">
    <property type="protein sequence ID" value="CAG60979.1"/>
    <property type="molecule type" value="Genomic_DNA"/>
</dbReference>
<dbReference type="RefSeq" id="XP_448028.1">
    <property type="nucleotide sequence ID" value="XM_448028.1"/>
</dbReference>
<dbReference type="SMR" id="Q8NJR5"/>
<dbReference type="FunCoup" id="Q8NJR5">
    <property type="interactions" value="781"/>
</dbReference>
<dbReference type="STRING" id="284593.Q8NJR5"/>
<dbReference type="EnsemblFungi" id="CAGL0J07392g-T">
    <property type="protein sequence ID" value="CAGL0J07392g-T-p1"/>
    <property type="gene ID" value="CAGL0J07392g"/>
</dbReference>
<dbReference type="GeneID" id="2889591"/>
<dbReference type="KEGG" id="cgr:2889591"/>
<dbReference type="CGD" id="CAL0129812">
    <property type="gene designation" value="URE2"/>
</dbReference>
<dbReference type="VEuPathDB" id="FungiDB:CAGL0J07392g"/>
<dbReference type="eggNOG" id="KOG0867">
    <property type="taxonomic scope" value="Eukaryota"/>
</dbReference>
<dbReference type="HOGENOM" id="CLU_011226_14_1_1"/>
<dbReference type="InParanoid" id="Q8NJR5"/>
<dbReference type="OMA" id="YEPHRID"/>
<dbReference type="Proteomes" id="UP000002428">
    <property type="component" value="Chromosome J"/>
</dbReference>
<dbReference type="GO" id="GO:0005737">
    <property type="term" value="C:cytoplasm"/>
    <property type="evidence" value="ECO:0007669"/>
    <property type="project" value="EnsemblFungi"/>
</dbReference>
<dbReference type="GO" id="GO:0004602">
    <property type="term" value="F:glutathione peroxidase activity"/>
    <property type="evidence" value="ECO:0007669"/>
    <property type="project" value="EnsemblFungi"/>
</dbReference>
<dbReference type="GO" id="GO:0051219">
    <property type="term" value="F:phosphoprotein binding"/>
    <property type="evidence" value="ECO:0007669"/>
    <property type="project" value="EnsemblFungi"/>
</dbReference>
<dbReference type="GO" id="GO:0003714">
    <property type="term" value="F:transcription corepressor activity"/>
    <property type="evidence" value="ECO:0007669"/>
    <property type="project" value="InterPro"/>
</dbReference>
<dbReference type="GO" id="GO:0010621">
    <property type="term" value="P:negative regulation of transcription by transcription factor localization"/>
    <property type="evidence" value="ECO:0007669"/>
    <property type="project" value="EnsemblFungi"/>
</dbReference>
<dbReference type="GO" id="GO:0042128">
    <property type="term" value="P:nitrate assimilation"/>
    <property type="evidence" value="ECO:0007669"/>
    <property type="project" value="UniProtKB-KW"/>
</dbReference>
<dbReference type="GO" id="GO:0032447">
    <property type="term" value="P:protein urmylation"/>
    <property type="evidence" value="ECO:0007669"/>
    <property type="project" value="EnsemblFungi"/>
</dbReference>
<dbReference type="GO" id="GO:0006808">
    <property type="term" value="P:regulation of nitrogen utilization"/>
    <property type="evidence" value="ECO:0007669"/>
    <property type="project" value="EnsemblFungi"/>
</dbReference>
<dbReference type="CDD" id="cd10293">
    <property type="entry name" value="GST_C_Ure2p"/>
    <property type="match status" value="1"/>
</dbReference>
<dbReference type="CDD" id="cd03048">
    <property type="entry name" value="GST_N_Ure2p_like"/>
    <property type="match status" value="1"/>
</dbReference>
<dbReference type="FunFam" id="1.20.1050.10:FF:000034">
    <property type="entry name" value="Transcriptional regulator URE2"/>
    <property type="match status" value="1"/>
</dbReference>
<dbReference type="Gene3D" id="1.20.1050.10">
    <property type="match status" value="1"/>
</dbReference>
<dbReference type="Gene3D" id="3.40.30.10">
    <property type="entry name" value="Glutaredoxin"/>
    <property type="match status" value="1"/>
</dbReference>
<dbReference type="InterPro" id="IPR010987">
    <property type="entry name" value="Glutathione-S-Trfase_C-like"/>
</dbReference>
<dbReference type="InterPro" id="IPR036282">
    <property type="entry name" value="Glutathione-S-Trfase_C_sf"/>
</dbReference>
<dbReference type="InterPro" id="IPR040079">
    <property type="entry name" value="Glutathione_S-Trfase"/>
</dbReference>
<dbReference type="InterPro" id="IPR004045">
    <property type="entry name" value="Glutathione_S-Trfase_N"/>
</dbReference>
<dbReference type="InterPro" id="IPR004046">
    <property type="entry name" value="GST_C"/>
</dbReference>
<dbReference type="InterPro" id="IPR036249">
    <property type="entry name" value="Thioredoxin-like_sf"/>
</dbReference>
<dbReference type="InterPro" id="IPR017298">
    <property type="entry name" value="Ure2"/>
</dbReference>
<dbReference type="PANTHER" id="PTHR44051">
    <property type="entry name" value="GLUTATHIONE S-TRANSFERASE-RELATED"/>
    <property type="match status" value="1"/>
</dbReference>
<dbReference type="PANTHER" id="PTHR44051:SF3">
    <property type="entry name" value="TRANSCRIPTIONAL REGULATOR URE2"/>
    <property type="match status" value="1"/>
</dbReference>
<dbReference type="Pfam" id="PF00043">
    <property type="entry name" value="GST_C"/>
    <property type="match status" value="1"/>
</dbReference>
<dbReference type="Pfam" id="PF02798">
    <property type="entry name" value="GST_N"/>
    <property type="match status" value="1"/>
</dbReference>
<dbReference type="PIRSF" id="PIRSF037861">
    <property type="entry name" value="Prion_URE2"/>
    <property type="match status" value="1"/>
</dbReference>
<dbReference type="SFLD" id="SFLDS00019">
    <property type="entry name" value="Glutathione_Transferase_(cytos"/>
    <property type="match status" value="1"/>
</dbReference>
<dbReference type="SFLD" id="SFLDG00358">
    <property type="entry name" value="Main_(cytGST)"/>
    <property type="match status" value="1"/>
</dbReference>
<dbReference type="SUPFAM" id="SSF47616">
    <property type="entry name" value="GST C-terminal domain-like"/>
    <property type="match status" value="1"/>
</dbReference>
<dbReference type="SUPFAM" id="SSF52833">
    <property type="entry name" value="Thioredoxin-like"/>
    <property type="match status" value="1"/>
</dbReference>
<dbReference type="PROSITE" id="PS50405">
    <property type="entry name" value="GST_CTER"/>
    <property type="match status" value="1"/>
</dbReference>
<dbReference type="PROSITE" id="PS50404">
    <property type="entry name" value="GST_NTER"/>
    <property type="match status" value="1"/>
</dbReference>
<reference key="1">
    <citation type="journal article" date="2002" name="Proc. Natl. Acad. Sci. U.S.A.">
        <title>Conservation of a portion of the S. cerevisiae Ure2p prion domain that interacts with the full-length protein.</title>
        <authorList>
            <person name="Edskes H.K."/>
            <person name="Wickner R.B."/>
        </authorList>
    </citation>
    <scope>NUCLEOTIDE SEQUENCE [GENOMIC DNA]</scope>
    <source>
        <strain>37A</strain>
    </source>
</reference>
<reference key="2">
    <citation type="journal article" date="2004" name="Nature">
        <title>Genome evolution in yeasts.</title>
        <authorList>
            <person name="Dujon B."/>
            <person name="Sherman D."/>
            <person name="Fischer G."/>
            <person name="Durrens P."/>
            <person name="Casaregola S."/>
            <person name="Lafontaine I."/>
            <person name="de Montigny J."/>
            <person name="Marck C."/>
            <person name="Neuveglise C."/>
            <person name="Talla E."/>
            <person name="Goffard N."/>
            <person name="Frangeul L."/>
            <person name="Aigle M."/>
            <person name="Anthouard V."/>
            <person name="Babour A."/>
            <person name="Barbe V."/>
            <person name="Barnay S."/>
            <person name="Blanchin S."/>
            <person name="Beckerich J.-M."/>
            <person name="Beyne E."/>
            <person name="Bleykasten C."/>
            <person name="Boisrame A."/>
            <person name="Boyer J."/>
            <person name="Cattolico L."/>
            <person name="Confanioleri F."/>
            <person name="de Daruvar A."/>
            <person name="Despons L."/>
            <person name="Fabre E."/>
            <person name="Fairhead C."/>
            <person name="Ferry-Dumazet H."/>
            <person name="Groppi A."/>
            <person name="Hantraye F."/>
            <person name="Hennequin C."/>
            <person name="Jauniaux N."/>
            <person name="Joyet P."/>
            <person name="Kachouri R."/>
            <person name="Kerrest A."/>
            <person name="Koszul R."/>
            <person name="Lemaire M."/>
            <person name="Lesur I."/>
            <person name="Ma L."/>
            <person name="Muller H."/>
            <person name="Nicaud J.-M."/>
            <person name="Nikolski M."/>
            <person name="Oztas S."/>
            <person name="Ozier-Kalogeropoulos O."/>
            <person name="Pellenz S."/>
            <person name="Potier S."/>
            <person name="Richard G.-F."/>
            <person name="Straub M.-L."/>
            <person name="Suleau A."/>
            <person name="Swennen D."/>
            <person name="Tekaia F."/>
            <person name="Wesolowski-Louvel M."/>
            <person name="Westhof E."/>
            <person name="Wirth B."/>
            <person name="Zeniou-Meyer M."/>
            <person name="Zivanovic Y."/>
            <person name="Bolotin-Fukuhara M."/>
            <person name="Thierry A."/>
            <person name="Bouchier C."/>
            <person name="Caudron B."/>
            <person name="Scarpelli C."/>
            <person name="Gaillardin C."/>
            <person name="Weissenbach J."/>
            <person name="Wincker P."/>
            <person name="Souciet J.-L."/>
        </authorList>
    </citation>
    <scope>NUCLEOTIDE SEQUENCE [LARGE SCALE GENOMIC DNA]</scope>
    <source>
        <strain>ATCC 2001 / BCRC 20586 / JCM 3761 / NBRC 0622 / NRRL Y-65 / CBS 138</strain>
    </source>
</reference>
<comment type="function">
    <text evidence="1">Plays an important role in the cellular response to the nitrogen source. URE2 gene plays a major part in the repression of GLN1 and GDH2 genes by glutamine, and is required for the inactivation of glutamine synthetase. URE2 gene product may catalytically inactivate GLN3 in response to an increase in the intracellular concentration of glutamine (By similarity).</text>
</comment>
<comment type="subunit">
    <text evidence="1">Homodimer.</text>
</comment>
<comment type="similarity">
    <text evidence="2">Belongs to the GST superfamily.</text>
</comment>
<protein>
    <recommendedName>
        <fullName>Protein URE2</fullName>
    </recommendedName>
</protein>
<feature type="chain" id="PRO_0000186005" description="Protein URE2">
    <location>
        <begin position="1"/>
        <end position="355"/>
    </location>
</feature>
<feature type="domain" description="GST N-terminal">
    <location>
        <begin position="113"/>
        <end position="197"/>
    </location>
</feature>
<feature type="domain" description="GST C-terminal">
    <location>
        <begin position="206"/>
        <end position="355"/>
    </location>
</feature>
<feature type="sequence conflict" description="In Ref. 1; AAM91940." evidence="2" ref="1">
    <original>N</original>
    <variation>S</variation>
    <location>
        <position position="55"/>
    </location>
</feature>
<gene>
    <name type="primary">URE2</name>
    <name type="ordered locus">CAGL0J07392g</name>
</gene>
<name>URE2_CANGA</name>
<sequence>MGDSRNTGTISNLSSALRQVNIGSGQDQKNINYEFSNGLNNNVNDNGNHNLVNTNEDNVNKDGSINTNMMSRQVPIQHTHGSQLLQQERMNEQQFNPMEYSRISKFFQNQPMEGYTLFSHRSAPNGFKVSIVLSELGLQYNTIFLDFNLGEHRAPEFVSVNPNARVPALIDHGLENLAIWESGAILLHLVNKFYKETGNPLLWSDDLADQAQINAWLFFQTSGHAPMIGQALHFRYFHTQKIESAVERYTEEVRRVYGVIEMALAERREALIMELDTDNAAAYSAGTTPLSQSRFFDYPVWLVGDKLTIADLSFVPWNNVVDRIGINIKVEFPEVYKWTKHMMRRPAVIKALRGE</sequence>
<proteinExistence type="inferred from homology"/>